<gene>
    <name type="primary">ARHGEF19</name>
</gene>
<name>ARHGJ_HUMAN</name>
<feature type="chain" id="PRO_0000285131" description="Rho guanine nucleotide exchange factor 19">
    <location>
        <begin position="1"/>
        <end position="802"/>
    </location>
</feature>
<feature type="domain" description="DH" evidence="2">
    <location>
        <begin position="376"/>
        <end position="560"/>
    </location>
</feature>
<feature type="domain" description="PH" evidence="3">
    <location>
        <begin position="592"/>
        <end position="704"/>
    </location>
</feature>
<feature type="domain" description="SH3" evidence="4">
    <location>
        <begin position="715"/>
        <end position="776"/>
    </location>
</feature>
<feature type="region of interest" description="Disordered" evidence="5">
    <location>
        <begin position="1"/>
        <end position="21"/>
    </location>
</feature>
<feature type="region of interest" description="Disordered" evidence="5">
    <location>
        <begin position="84"/>
        <end position="138"/>
    </location>
</feature>
<feature type="region of interest" description="Disordered" evidence="5">
    <location>
        <begin position="171"/>
        <end position="190"/>
    </location>
</feature>
<feature type="region of interest" description="Disordered" evidence="5">
    <location>
        <begin position="222"/>
        <end position="283"/>
    </location>
</feature>
<feature type="region of interest" description="Disordered" evidence="5">
    <location>
        <begin position="306"/>
        <end position="342"/>
    </location>
</feature>
<feature type="compositionally biased region" description="Basic and acidic residues" evidence="5">
    <location>
        <begin position="245"/>
        <end position="269"/>
    </location>
</feature>
<feature type="compositionally biased region" description="Basic and acidic residues" evidence="5">
    <location>
        <begin position="306"/>
        <end position="315"/>
    </location>
</feature>
<feature type="compositionally biased region" description="Acidic residues" evidence="5">
    <location>
        <begin position="316"/>
        <end position="325"/>
    </location>
</feature>
<feature type="splice variant" id="VSP_024827" description="In isoform 2." evidence="7">
    <location>
        <begin position="484"/>
        <end position="783"/>
    </location>
</feature>
<feature type="sequence variant" id="VAR_031950" description="In dbSNP:rs221058." evidence="6">
    <original>G</original>
    <variation>R</variation>
    <location>
        <position position="163"/>
    </location>
</feature>
<feature type="sequence variant" id="VAR_031951" description="In dbSNP:rs221057." evidence="6">
    <original>E</original>
    <variation>Q</variation>
    <location>
        <position position="238"/>
    </location>
</feature>
<comment type="function">
    <text evidence="1">Acts as a guanine nucleotide exchange factor (GEF) for RhoA GTPase.</text>
</comment>
<comment type="interaction">
    <interactant intactId="EBI-7799822">
        <id>Q8IW93</id>
    </interactant>
    <interactant intactId="EBI-741896">
        <id>Q9P286</id>
        <label>PAK5</label>
    </interactant>
    <organismsDiffer>false</organismsDiffer>
    <experiments>3</experiments>
</comment>
<comment type="interaction">
    <interactant intactId="EBI-7799822">
        <id>Q8IW93</id>
    </interactant>
    <interactant intactId="EBI-446668">
        <id>P61586</id>
        <label>RHOA</label>
    </interactant>
    <organismsDiffer>false</organismsDiffer>
    <experiments>2</experiments>
</comment>
<comment type="alternative products">
    <event type="alternative splicing"/>
    <isoform>
        <id>Q8IW93-1</id>
        <name>1</name>
        <sequence type="displayed"/>
    </isoform>
    <isoform>
        <id>Q8IW93-2</id>
        <name>2</name>
        <sequence type="described" ref="VSP_024827"/>
    </isoform>
</comment>
<dbReference type="EMBL" id="AK091281">
    <property type="protein sequence ID" value="BAC03627.1"/>
    <property type="molecule type" value="mRNA"/>
</dbReference>
<dbReference type="EMBL" id="AL109627">
    <property type="status" value="NOT_ANNOTATED_CDS"/>
    <property type="molecule type" value="Genomic_DNA"/>
</dbReference>
<dbReference type="EMBL" id="BC012982">
    <property type="protein sequence ID" value="AAH12982.1"/>
    <property type="molecule type" value="mRNA"/>
</dbReference>
<dbReference type="EMBL" id="BC040640">
    <property type="protein sequence ID" value="AAH40640.1"/>
    <property type="molecule type" value="mRNA"/>
</dbReference>
<dbReference type="CCDS" id="CCDS170.1">
    <molecule id="Q8IW93-1"/>
</dbReference>
<dbReference type="RefSeq" id="NP_694945.2">
    <molecule id="Q8IW93-1"/>
    <property type="nucleotide sequence ID" value="NM_153213.4"/>
</dbReference>
<dbReference type="RefSeq" id="XP_011539008.1">
    <molecule id="Q8IW93-1"/>
    <property type="nucleotide sequence ID" value="XM_011540706.4"/>
</dbReference>
<dbReference type="RefSeq" id="XP_054188738.1">
    <molecule id="Q8IW93-1"/>
    <property type="nucleotide sequence ID" value="XM_054332763.1"/>
</dbReference>
<dbReference type="RefSeq" id="XP_054190405.1">
    <molecule id="Q8IW93-1"/>
    <property type="nucleotide sequence ID" value="XM_054334430.1"/>
</dbReference>
<dbReference type="PDB" id="8YR7">
    <property type="method" value="X-ray"/>
    <property type="resolution" value="3.00 A"/>
    <property type="chains" value="A=349-359"/>
</dbReference>
<dbReference type="PDBsum" id="8YR7"/>
<dbReference type="SMR" id="Q8IW93"/>
<dbReference type="BioGRID" id="126104">
    <property type="interactions" value="58"/>
</dbReference>
<dbReference type="FunCoup" id="Q8IW93">
    <property type="interactions" value="639"/>
</dbReference>
<dbReference type="IntAct" id="Q8IW93">
    <property type="interactions" value="50"/>
</dbReference>
<dbReference type="MINT" id="Q8IW93"/>
<dbReference type="STRING" id="9606.ENSP00000270747"/>
<dbReference type="iPTMnet" id="Q8IW93"/>
<dbReference type="PhosphoSitePlus" id="Q8IW93"/>
<dbReference type="BioMuta" id="ARHGEF19"/>
<dbReference type="DMDM" id="74750701"/>
<dbReference type="jPOST" id="Q8IW93"/>
<dbReference type="MassIVE" id="Q8IW93"/>
<dbReference type="PaxDb" id="9606-ENSP00000270747"/>
<dbReference type="PeptideAtlas" id="Q8IW93"/>
<dbReference type="ProteomicsDB" id="70823">
    <molecule id="Q8IW93-1"/>
</dbReference>
<dbReference type="ProteomicsDB" id="70824">
    <molecule id="Q8IW93-2"/>
</dbReference>
<dbReference type="Antibodypedia" id="46665">
    <property type="antibodies" value="81 antibodies from 27 providers"/>
</dbReference>
<dbReference type="DNASU" id="128272"/>
<dbReference type="Ensembl" id="ENST00000270747.8">
    <molecule id="Q8IW93-1"/>
    <property type="protein sequence ID" value="ENSP00000270747.3"/>
    <property type="gene ID" value="ENSG00000142632.17"/>
</dbReference>
<dbReference type="Ensembl" id="ENST00000707385.1">
    <molecule id="Q8IW93-1"/>
    <property type="protein sequence ID" value="ENSP00000516855.1"/>
    <property type="gene ID" value="ENSG00000291381.1"/>
</dbReference>
<dbReference type="GeneID" id="128272"/>
<dbReference type="KEGG" id="hsa:128272"/>
<dbReference type="MANE-Select" id="ENST00000270747.8">
    <property type="protein sequence ID" value="ENSP00000270747.3"/>
    <property type="RefSeq nucleotide sequence ID" value="NM_153213.5"/>
    <property type="RefSeq protein sequence ID" value="NP_694945.2"/>
</dbReference>
<dbReference type="UCSC" id="uc001ayc.1">
    <molecule id="Q8IW93-1"/>
    <property type="organism name" value="human"/>
</dbReference>
<dbReference type="AGR" id="HGNC:26604"/>
<dbReference type="CTD" id="128272"/>
<dbReference type="DisGeNET" id="128272"/>
<dbReference type="GeneCards" id="ARHGEF19"/>
<dbReference type="HGNC" id="HGNC:26604">
    <property type="gene designation" value="ARHGEF19"/>
</dbReference>
<dbReference type="HPA" id="ENSG00000142632">
    <property type="expression patterns" value="Tissue enhanced (skin)"/>
</dbReference>
<dbReference type="MIM" id="612496">
    <property type="type" value="gene"/>
</dbReference>
<dbReference type="neXtProt" id="NX_Q8IW93"/>
<dbReference type="OpenTargets" id="ENSG00000142632"/>
<dbReference type="PharmGKB" id="PA134887028"/>
<dbReference type="VEuPathDB" id="HostDB:ENSG00000142632"/>
<dbReference type="eggNOG" id="KOG3523">
    <property type="taxonomic scope" value="Eukaryota"/>
</dbReference>
<dbReference type="GeneTree" id="ENSGT01030000234571"/>
<dbReference type="HOGENOM" id="CLU_012820_1_0_1"/>
<dbReference type="InParanoid" id="Q8IW93"/>
<dbReference type="OMA" id="QDRPQVQ"/>
<dbReference type="OrthoDB" id="27593at2759"/>
<dbReference type="PAN-GO" id="Q8IW93">
    <property type="GO annotations" value="2 GO annotations based on evolutionary models"/>
</dbReference>
<dbReference type="PhylomeDB" id="Q8IW93"/>
<dbReference type="TreeFam" id="TF316357"/>
<dbReference type="PathwayCommons" id="Q8IW93"/>
<dbReference type="Reactome" id="R-HSA-193648">
    <property type="pathway name" value="NRAGE signals death through JNK"/>
</dbReference>
<dbReference type="Reactome" id="R-HSA-416482">
    <property type="pathway name" value="G alpha (12/13) signalling events"/>
</dbReference>
<dbReference type="Reactome" id="R-HSA-8980692">
    <property type="pathway name" value="RHOA GTPase cycle"/>
</dbReference>
<dbReference type="Reactome" id="R-HSA-9013148">
    <property type="pathway name" value="CDC42 GTPase cycle"/>
</dbReference>
<dbReference type="Reactome" id="R-HSA-9013149">
    <property type="pathway name" value="RAC1 GTPase cycle"/>
</dbReference>
<dbReference type="SignaLink" id="Q8IW93"/>
<dbReference type="SIGNOR" id="Q8IW93"/>
<dbReference type="BioGRID-ORCS" id="128272">
    <property type="hits" value="19 hits in 1157 CRISPR screens"/>
</dbReference>
<dbReference type="GenomeRNAi" id="128272"/>
<dbReference type="Pharos" id="Q8IW93">
    <property type="development level" value="Tbio"/>
</dbReference>
<dbReference type="PRO" id="PR:Q8IW93"/>
<dbReference type="Proteomes" id="UP000005640">
    <property type="component" value="Chromosome 1"/>
</dbReference>
<dbReference type="RNAct" id="Q8IW93">
    <property type="molecule type" value="protein"/>
</dbReference>
<dbReference type="Bgee" id="ENSG00000142632">
    <property type="expression patterns" value="Expressed in skin of abdomen and 138 other cell types or tissues"/>
</dbReference>
<dbReference type="ExpressionAtlas" id="Q8IW93">
    <property type="expression patterns" value="baseline and differential"/>
</dbReference>
<dbReference type="GO" id="GO:0005829">
    <property type="term" value="C:cytosol"/>
    <property type="evidence" value="ECO:0000304"/>
    <property type="project" value="Reactome"/>
</dbReference>
<dbReference type="GO" id="GO:0005096">
    <property type="term" value="F:GTPase activator activity"/>
    <property type="evidence" value="ECO:0007669"/>
    <property type="project" value="UniProtKB-KW"/>
</dbReference>
<dbReference type="GO" id="GO:0005085">
    <property type="term" value="F:guanyl-nucleotide exchange factor activity"/>
    <property type="evidence" value="ECO:0000304"/>
    <property type="project" value="Reactome"/>
</dbReference>
<dbReference type="GO" id="GO:0032956">
    <property type="term" value="P:regulation of actin cytoskeleton organization"/>
    <property type="evidence" value="ECO:0000316"/>
    <property type="project" value="MGI"/>
</dbReference>
<dbReference type="GO" id="GO:0051056">
    <property type="term" value="P:regulation of small GTPase mediated signal transduction"/>
    <property type="evidence" value="ECO:0000304"/>
    <property type="project" value="Reactome"/>
</dbReference>
<dbReference type="GO" id="GO:0060071">
    <property type="term" value="P:Wnt signaling pathway, planar cell polarity pathway"/>
    <property type="evidence" value="ECO:0000303"/>
    <property type="project" value="ParkinsonsUK-UCL"/>
</dbReference>
<dbReference type="GO" id="GO:0042060">
    <property type="term" value="P:wound healing"/>
    <property type="evidence" value="ECO:0000318"/>
    <property type="project" value="GO_Central"/>
</dbReference>
<dbReference type="CDD" id="cd01221">
    <property type="entry name" value="PH_ephexin"/>
    <property type="match status" value="1"/>
</dbReference>
<dbReference type="CDD" id="cd00160">
    <property type="entry name" value="RhoGEF"/>
    <property type="match status" value="1"/>
</dbReference>
<dbReference type="CDD" id="cd11940">
    <property type="entry name" value="SH3_ARHGEF5_19"/>
    <property type="match status" value="1"/>
</dbReference>
<dbReference type="FunFam" id="2.30.29.30:FF:000205">
    <property type="entry name" value="Rho guanine nucleotide exchange factor (GEF) 19"/>
    <property type="match status" value="1"/>
</dbReference>
<dbReference type="FunFam" id="2.30.30.40:FF:000111">
    <property type="entry name" value="Rho guanine nucleotide exchange factor (GEF) 5"/>
    <property type="match status" value="1"/>
</dbReference>
<dbReference type="FunFam" id="1.20.900.10:FF:000007">
    <property type="entry name" value="rho guanine nucleotide exchange factor 19"/>
    <property type="match status" value="1"/>
</dbReference>
<dbReference type="Gene3D" id="1.20.900.10">
    <property type="entry name" value="Dbl homology (DH) domain"/>
    <property type="match status" value="1"/>
</dbReference>
<dbReference type="Gene3D" id="2.30.29.30">
    <property type="entry name" value="Pleckstrin-homology domain (PH domain)/Phosphotyrosine-binding domain (PTB)"/>
    <property type="match status" value="1"/>
</dbReference>
<dbReference type="Gene3D" id="2.30.30.40">
    <property type="entry name" value="SH3 Domains"/>
    <property type="match status" value="1"/>
</dbReference>
<dbReference type="InterPro" id="IPR035899">
    <property type="entry name" value="DBL_dom_sf"/>
</dbReference>
<dbReference type="InterPro" id="IPR000219">
    <property type="entry name" value="DH_dom"/>
</dbReference>
<dbReference type="InterPro" id="IPR047271">
    <property type="entry name" value="Ephexin-like"/>
</dbReference>
<dbReference type="InterPro" id="IPR011993">
    <property type="entry name" value="PH-like_dom_sf"/>
</dbReference>
<dbReference type="InterPro" id="IPR001849">
    <property type="entry name" value="PH_domain"/>
</dbReference>
<dbReference type="InterPro" id="IPR047270">
    <property type="entry name" value="PH_ephexin"/>
</dbReference>
<dbReference type="InterPro" id="IPR036028">
    <property type="entry name" value="SH3-like_dom_sf"/>
</dbReference>
<dbReference type="InterPro" id="IPR001452">
    <property type="entry name" value="SH3_domain"/>
</dbReference>
<dbReference type="PANTHER" id="PTHR12845">
    <property type="entry name" value="GUANINE NUCLEOTIDE EXCHANGE FACTOR"/>
    <property type="match status" value="1"/>
</dbReference>
<dbReference type="PANTHER" id="PTHR12845:SF6">
    <property type="entry name" value="RHO GUANINE NUCLEOTIDE EXCHANGE FACTOR 19"/>
    <property type="match status" value="1"/>
</dbReference>
<dbReference type="Pfam" id="PF00621">
    <property type="entry name" value="RhoGEF"/>
    <property type="match status" value="1"/>
</dbReference>
<dbReference type="Pfam" id="PF07653">
    <property type="entry name" value="SH3_2"/>
    <property type="match status" value="1"/>
</dbReference>
<dbReference type="SMART" id="SM00233">
    <property type="entry name" value="PH"/>
    <property type="match status" value="1"/>
</dbReference>
<dbReference type="SMART" id="SM00325">
    <property type="entry name" value="RhoGEF"/>
    <property type="match status" value="1"/>
</dbReference>
<dbReference type="SMART" id="SM00326">
    <property type="entry name" value="SH3"/>
    <property type="match status" value="1"/>
</dbReference>
<dbReference type="SUPFAM" id="SSF48065">
    <property type="entry name" value="DBL homology domain (DH-domain)"/>
    <property type="match status" value="1"/>
</dbReference>
<dbReference type="SUPFAM" id="SSF50729">
    <property type="entry name" value="PH domain-like"/>
    <property type="match status" value="1"/>
</dbReference>
<dbReference type="SUPFAM" id="SSF50044">
    <property type="entry name" value="SH3-domain"/>
    <property type="match status" value="1"/>
</dbReference>
<dbReference type="PROSITE" id="PS50010">
    <property type="entry name" value="DH_2"/>
    <property type="match status" value="1"/>
</dbReference>
<dbReference type="PROSITE" id="PS50003">
    <property type="entry name" value="PH_DOMAIN"/>
    <property type="match status" value="1"/>
</dbReference>
<dbReference type="PROSITE" id="PS50002">
    <property type="entry name" value="SH3"/>
    <property type="match status" value="1"/>
</dbReference>
<reference key="1">
    <citation type="journal article" date="2004" name="Nat. Genet.">
        <title>Complete sequencing and characterization of 21,243 full-length human cDNAs.</title>
        <authorList>
            <person name="Ota T."/>
            <person name="Suzuki Y."/>
            <person name="Nishikawa T."/>
            <person name="Otsuki T."/>
            <person name="Sugiyama T."/>
            <person name="Irie R."/>
            <person name="Wakamatsu A."/>
            <person name="Hayashi K."/>
            <person name="Sato H."/>
            <person name="Nagai K."/>
            <person name="Kimura K."/>
            <person name="Makita H."/>
            <person name="Sekine M."/>
            <person name="Obayashi M."/>
            <person name="Nishi T."/>
            <person name="Shibahara T."/>
            <person name="Tanaka T."/>
            <person name="Ishii S."/>
            <person name="Yamamoto J."/>
            <person name="Saito K."/>
            <person name="Kawai Y."/>
            <person name="Isono Y."/>
            <person name="Nakamura Y."/>
            <person name="Nagahari K."/>
            <person name="Murakami K."/>
            <person name="Yasuda T."/>
            <person name="Iwayanagi T."/>
            <person name="Wagatsuma M."/>
            <person name="Shiratori A."/>
            <person name="Sudo H."/>
            <person name="Hosoiri T."/>
            <person name="Kaku Y."/>
            <person name="Kodaira H."/>
            <person name="Kondo H."/>
            <person name="Sugawara M."/>
            <person name="Takahashi M."/>
            <person name="Kanda K."/>
            <person name="Yokoi T."/>
            <person name="Furuya T."/>
            <person name="Kikkawa E."/>
            <person name="Omura Y."/>
            <person name="Abe K."/>
            <person name="Kamihara K."/>
            <person name="Katsuta N."/>
            <person name="Sato K."/>
            <person name="Tanikawa M."/>
            <person name="Yamazaki M."/>
            <person name="Ninomiya K."/>
            <person name="Ishibashi T."/>
            <person name="Yamashita H."/>
            <person name="Murakawa K."/>
            <person name="Fujimori K."/>
            <person name="Tanai H."/>
            <person name="Kimata M."/>
            <person name="Watanabe M."/>
            <person name="Hiraoka S."/>
            <person name="Chiba Y."/>
            <person name="Ishida S."/>
            <person name="Ono Y."/>
            <person name="Takiguchi S."/>
            <person name="Watanabe S."/>
            <person name="Yosida M."/>
            <person name="Hotuta T."/>
            <person name="Kusano J."/>
            <person name="Kanehori K."/>
            <person name="Takahashi-Fujii A."/>
            <person name="Hara H."/>
            <person name="Tanase T.-O."/>
            <person name="Nomura Y."/>
            <person name="Togiya S."/>
            <person name="Komai F."/>
            <person name="Hara R."/>
            <person name="Takeuchi K."/>
            <person name="Arita M."/>
            <person name="Imose N."/>
            <person name="Musashino K."/>
            <person name="Yuuki H."/>
            <person name="Oshima A."/>
            <person name="Sasaki N."/>
            <person name="Aotsuka S."/>
            <person name="Yoshikawa Y."/>
            <person name="Matsunawa H."/>
            <person name="Ichihara T."/>
            <person name="Shiohata N."/>
            <person name="Sano S."/>
            <person name="Moriya S."/>
            <person name="Momiyama H."/>
            <person name="Satoh N."/>
            <person name="Takami S."/>
            <person name="Terashima Y."/>
            <person name="Suzuki O."/>
            <person name="Nakagawa S."/>
            <person name="Senoh A."/>
            <person name="Mizoguchi H."/>
            <person name="Goto Y."/>
            <person name="Shimizu F."/>
            <person name="Wakebe H."/>
            <person name="Hishigaki H."/>
            <person name="Watanabe T."/>
            <person name="Sugiyama A."/>
            <person name="Takemoto M."/>
            <person name="Kawakami B."/>
            <person name="Yamazaki M."/>
            <person name="Watanabe K."/>
            <person name="Kumagai A."/>
            <person name="Itakura S."/>
            <person name="Fukuzumi Y."/>
            <person name="Fujimori Y."/>
            <person name="Komiyama M."/>
            <person name="Tashiro H."/>
            <person name="Tanigami A."/>
            <person name="Fujiwara T."/>
            <person name="Ono T."/>
            <person name="Yamada K."/>
            <person name="Fujii Y."/>
            <person name="Ozaki K."/>
            <person name="Hirao M."/>
            <person name="Ohmori Y."/>
            <person name="Kawabata A."/>
            <person name="Hikiji T."/>
            <person name="Kobatake N."/>
            <person name="Inagaki H."/>
            <person name="Ikema Y."/>
            <person name="Okamoto S."/>
            <person name="Okitani R."/>
            <person name="Kawakami T."/>
            <person name="Noguchi S."/>
            <person name="Itoh T."/>
            <person name="Shigeta K."/>
            <person name="Senba T."/>
            <person name="Matsumura K."/>
            <person name="Nakajima Y."/>
            <person name="Mizuno T."/>
            <person name="Morinaga M."/>
            <person name="Sasaki M."/>
            <person name="Togashi T."/>
            <person name="Oyama M."/>
            <person name="Hata H."/>
            <person name="Watanabe M."/>
            <person name="Komatsu T."/>
            <person name="Mizushima-Sugano J."/>
            <person name="Satoh T."/>
            <person name="Shirai Y."/>
            <person name="Takahashi Y."/>
            <person name="Nakagawa K."/>
            <person name="Okumura K."/>
            <person name="Nagase T."/>
            <person name="Nomura N."/>
            <person name="Kikuchi H."/>
            <person name="Masuho Y."/>
            <person name="Yamashita R."/>
            <person name="Nakai K."/>
            <person name="Yada T."/>
            <person name="Nakamura Y."/>
            <person name="Ohara O."/>
            <person name="Isogai T."/>
            <person name="Sugano S."/>
        </authorList>
    </citation>
    <scope>NUCLEOTIDE SEQUENCE [LARGE SCALE MRNA] (ISOFORM 2)</scope>
    <scope>VARIANTS ARG-163 AND GLN-238</scope>
    <source>
        <tissue>Tongue</tissue>
    </source>
</reference>
<reference key="2">
    <citation type="journal article" date="2006" name="Nature">
        <title>The DNA sequence and biological annotation of human chromosome 1.</title>
        <authorList>
            <person name="Gregory S.G."/>
            <person name="Barlow K.F."/>
            <person name="McLay K.E."/>
            <person name="Kaul R."/>
            <person name="Swarbreck D."/>
            <person name="Dunham A."/>
            <person name="Scott C.E."/>
            <person name="Howe K.L."/>
            <person name="Woodfine K."/>
            <person name="Spencer C.C.A."/>
            <person name="Jones M.C."/>
            <person name="Gillson C."/>
            <person name="Searle S."/>
            <person name="Zhou Y."/>
            <person name="Kokocinski F."/>
            <person name="McDonald L."/>
            <person name="Evans R."/>
            <person name="Phillips K."/>
            <person name="Atkinson A."/>
            <person name="Cooper R."/>
            <person name="Jones C."/>
            <person name="Hall R.E."/>
            <person name="Andrews T.D."/>
            <person name="Lloyd C."/>
            <person name="Ainscough R."/>
            <person name="Almeida J.P."/>
            <person name="Ambrose K.D."/>
            <person name="Anderson F."/>
            <person name="Andrew R.W."/>
            <person name="Ashwell R.I.S."/>
            <person name="Aubin K."/>
            <person name="Babbage A.K."/>
            <person name="Bagguley C.L."/>
            <person name="Bailey J."/>
            <person name="Beasley H."/>
            <person name="Bethel G."/>
            <person name="Bird C.P."/>
            <person name="Bray-Allen S."/>
            <person name="Brown J.Y."/>
            <person name="Brown A.J."/>
            <person name="Buckley D."/>
            <person name="Burton J."/>
            <person name="Bye J."/>
            <person name="Carder C."/>
            <person name="Chapman J.C."/>
            <person name="Clark S.Y."/>
            <person name="Clarke G."/>
            <person name="Clee C."/>
            <person name="Cobley V."/>
            <person name="Collier R.E."/>
            <person name="Corby N."/>
            <person name="Coville G.J."/>
            <person name="Davies J."/>
            <person name="Deadman R."/>
            <person name="Dunn M."/>
            <person name="Earthrowl M."/>
            <person name="Ellington A.G."/>
            <person name="Errington H."/>
            <person name="Frankish A."/>
            <person name="Frankland J."/>
            <person name="French L."/>
            <person name="Garner P."/>
            <person name="Garnett J."/>
            <person name="Gay L."/>
            <person name="Ghori M.R.J."/>
            <person name="Gibson R."/>
            <person name="Gilby L.M."/>
            <person name="Gillett W."/>
            <person name="Glithero R.J."/>
            <person name="Grafham D.V."/>
            <person name="Griffiths C."/>
            <person name="Griffiths-Jones S."/>
            <person name="Grocock R."/>
            <person name="Hammond S."/>
            <person name="Harrison E.S.I."/>
            <person name="Hart E."/>
            <person name="Haugen E."/>
            <person name="Heath P.D."/>
            <person name="Holmes S."/>
            <person name="Holt K."/>
            <person name="Howden P.J."/>
            <person name="Hunt A.R."/>
            <person name="Hunt S.E."/>
            <person name="Hunter G."/>
            <person name="Isherwood J."/>
            <person name="James R."/>
            <person name="Johnson C."/>
            <person name="Johnson D."/>
            <person name="Joy A."/>
            <person name="Kay M."/>
            <person name="Kershaw J.K."/>
            <person name="Kibukawa M."/>
            <person name="Kimberley A.M."/>
            <person name="King A."/>
            <person name="Knights A.J."/>
            <person name="Lad H."/>
            <person name="Laird G."/>
            <person name="Lawlor S."/>
            <person name="Leongamornlert D.A."/>
            <person name="Lloyd D.M."/>
            <person name="Loveland J."/>
            <person name="Lovell J."/>
            <person name="Lush M.J."/>
            <person name="Lyne R."/>
            <person name="Martin S."/>
            <person name="Mashreghi-Mohammadi M."/>
            <person name="Matthews L."/>
            <person name="Matthews N.S.W."/>
            <person name="McLaren S."/>
            <person name="Milne S."/>
            <person name="Mistry S."/>
            <person name="Moore M.J.F."/>
            <person name="Nickerson T."/>
            <person name="O'Dell C.N."/>
            <person name="Oliver K."/>
            <person name="Palmeiri A."/>
            <person name="Palmer S.A."/>
            <person name="Parker A."/>
            <person name="Patel D."/>
            <person name="Pearce A.V."/>
            <person name="Peck A.I."/>
            <person name="Pelan S."/>
            <person name="Phelps K."/>
            <person name="Phillimore B.J."/>
            <person name="Plumb R."/>
            <person name="Rajan J."/>
            <person name="Raymond C."/>
            <person name="Rouse G."/>
            <person name="Saenphimmachak C."/>
            <person name="Sehra H.K."/>
            <person name="Sheridan E."/>
            <person name="Shownkeen R."/>
            <person name="Sims S."/>
            <person name="Skuce C.D."/>
            <person name="Smith M."/>
            <person name="Steward C."/>
            <person name="Subramanian S."/>
            <person name="Sycamore N."/>
            <person name="Tracey A."/>
            <person name="Tromans A."/>
            <person name="Van Helmond Z."/>
            <person name="Wall M."/>
            <person name="Wallis J.M."/>
            <person name="White S."/>
            <person name="Whitehead S.L."/>
            <person name="Wilkinson J.E."/>
            <person name="Willey D.L."/>
            <person name="Williams H."/>
            <person name="Wilming L."/>
            <person name="Wray P.W."/>
            <person name="Wu Z."/>
            <person name="Coulson A."/>
            <person name="Vaudin M."/>
            <person name="Sulston J.E."/>
            <person name="Durbin R.M."/>
            <person name="Hubbard T."/>
            <person name="Wooster R."/>
            <person name="Dunham I."/>
            <person name="Carter N.P."/>
            <person name="McVean G."/>
            <person name="Ross M.T."/>
            <person name="Harrow J."/>
            <person name="Olson M.V."/>
            <person name="Beck S."/>
            <person name="Rogers J."/>
            <person name="Bentley D.R."/>
        </authorList>
    </citation>
    <scope>NUCLEOTIDE SEQUENCE [LARGE SCALE GENOMIC DNA]</scope>
</reference>
<reference key="3">
    <citation type="journal article" date="2004" name="Genome Res.">
        <title>The status, quality, and expansion of the NIH full-length cDNA project: the Mammalian Gene Collection (MGC).</title>
        <authorList>
            <consortium name="The MGC Project Team"/>
        </authorList>
    </citation>
    <scope>NUCLEOTIDE SEQUENCE [LARGE SCALE MRNA] OF 97-802 (ISOFORM 1)</scope>
    <source>
        <tissue>Colon</tissue>
        <tissue>Pancreas</tissue>
    </source>
</reference>
<organism>
    <name type="scientific">Homo sapiens</name>
    <name type="common">Human</name>
    <dbReference type="NCBI Taxonomy" id="9606"/>
    <lineage>
        <taxon>Eukaryota</taxon>
        <taxon>Metazoa</taxon>
        <taxon>Chordata</taxon>
        <taxon>Craniata</taxon>
        <taxon>Vertebrata</taxon>
        <taxon>Euteleostomi</taxon>
        <taxon>Mammalia</taxon>
        <taxon>Eutheria</taxon>
        <taxon>Euarchontoglires</taxon>
        <taxon>Primates</taxon>
        <taxon>Haplorrhini</taxon>
        <taxon>Catarrhini</taxon>
        <taxon>Hominidae</taxon>
        <taxon>Homo</taxon>
    </lineage>
</organism>
<accession>Q8IW93</accession>
<accession>A6NJ04</accession>
<accession>Q5TEV2</accession>
<accession>Q6PJQ4</accession>
<accession>Q8N244</accession>
<keyword id="KW-0002">3D-structure</keyword>
<keyword id="KW-0025">Alternative splicing</keyword>
<keyword id="KW-0343">GTPase activation</keyword>
<keyword id="KW-0344">Guanine-nucleotide releasing factor</keyword>
<keyword id="KW-1267">Proteomics identification</keyword>
<keyword id="KW-1185">Reference proteome</keyword>
<keyword id="KW-0728">SH3 domain</keyword>
<protein>
    <recommendedName>
        <fullName>Rho guanine nucleotide exchange factor 19</fullName>
    </recommendedName>
    <alternativeName>
        <fullName>Ephexin-2</fullName>
    </alternativeName>
</protein>
<sequence>MDCGPPATLQPHLTGPPGTAHHPVAVCQQESLSFAELPALKPPSPVCLDLFPVAPEELRAPGSRWSLGTPAPLQGLLWPLSPGGSDTEITSGGMRPSRAGSWPHCPGAQPPALEGPWSPRHTQPQRRASHGSEKKSAWRKMRVYQREEVPGCPEAHAVFLEPGQVVQEQALSTEEPRVELSGSTRVSLEGPERRRFSASELMTRLHSSLRLGRNSAARALISGSGTGAAREGKASGMEARSVEMSGDRVSRPAPGDSREGDWSEPRLDTQEEPPLGSRSTNERRQSRFLLNSVLYQEYSDVASARELRRQQREEEGPGDEAEGAEEGPGPPRANLSPSSSFRAQRSARGSTFSLWQDIPDVRGSGVLATLSLRDCKLQEAKFELITSEASYIHSLSVAVGHFLGSAELSECLGAQDKQWLFSKLPEVKSTSERFLQDLEQRLEADVLRFSVCDVVLDHCPAFRRVYLPYVTNQAYQERTYQRLLLENPRFPGILARLEESPVCQRLPLTSFLILPFQRITRLKMLVENILKRTAQGSEDEDMATKAFNALKELVQECNASVQSMKRTEELIHLSKKIHFEGKIFPLISQARWLVRHGELVELAPLPAAPPAKLKLSSKAVYLHLFNDCLLLSRRKELGKFAVFVHAKMAELQVRDLSLKLQGIPGHVFLLQLLHGQHMKHQFLLRARTESEKQRWISALCPSSPQEDKEVISEGEDCPQVQCVRTYKALHPDELTLEKTDILSVRTWTSDGWLEGVRLADGEKGWVPQAYVEEISSLSARLRNLRENKRVTSATSKLGEAPV</sequence>
<proteinExistence type="evidence at protein level"/>
<evidence type="ECO:0000250" key="1"/>
<evidence type="ECO:0000255" key="2">
    <source>
        <dbReference type="PROSITE-ProRule" id="PRU00062"/>
    </source>
</evidence>
<evidence type="ECO:0000255" key="3">
    <source>
        <dbReference type="PROSITE-ProRule" id="PRU00145"/>
    </source>
</evidence>
<evidence type="ECO:0000255" key="4">
    <source>
        <dbReference type="PROSITE-ProRule" id="PRU00192"/>
    </source>
</evidence>
<evidence type="ECO:0000256" key="5">
    <source>
        <dbReference type="SAM" id="MobiDB-lite"/>
    </source>
</evidence>
<evidence type="ECO:0000269" key="6">
    <source>
    </source>
</evidence>
<evidence type="ECO:0000303" key="7">
    <source>
    </source>
</evidence>